<proteinExistence type="inferred from homology"/>
<name>PPAX_LISIN</name>
<keyword id="KW-0378">Hydrolase</keyword>
<keyword id="KW-0460">Magnesium</keyword>
<dbReference type="EC" id="3.6.1.1" evidence="1"/>
<dbReference type="EMBL" id="AL596173">
    <property type="protein sequence ID" value="CAC97851.1"/>
    <property type="molecule type" value="Genomic_DNA"/>
</dbReference>
<dbReference type="PIR" id="AC1760">
    <property type="entry name" value="AC1760"/>
</dbReference>
<dbReference type="RefSeq" id="WP_003763908.1">
    <property type="nucleotide sequence ID" value="NC_003212.1"/>
</dbReference>
<dbReference type="SMR" id="Q928B2"/>
<dbReference type="STRING" id="272626.gene:17567005"/>
<dbReference type="GeneID" id="93235888"/>
<dbReference type="KEGG" id="lin:lin2624"/>
<dbReference type="eggNOG" id="COG0546">
    <property type="taxonomic scope" value="Bacteria"/>
</dbReference>
<dbReference type="HOGENOM" id="CLU_045011_19_3_9"/>
<dbReference type="OrthoDB" id="9807630at2"/>
<dbReference type="Proteomes" id="UP000002513">
    <property type="component" value="Chromosome"/>
</dbReference>
<dbReference type="GO" id="GO:0005829">
    <property type="term" value="C:cytosol"/>
    <property type="evidence" value="ECO:0007669"/>
    <property type="project" value="TreeGrafter"/>
</dbReference>
<dbReference type="GO" id="GO:0004427">
    <property type="term" value="F:inorganic diphosphate phosphatase activity"/>
    <property type="evidence" value="ECO:0007669"/>
    <property type="project" value="UniProtKB-UniRule"/>
</dbReference>
<dbReference type="GO" id="GO:0000287">
    <property type="term" value="F:magnesium ion binding"/>
    <property type="evidence" value="ECO:0007669"/>
    <property type="project" value="UniProtKB-UniRule"/>
</dbReference>
<dbReference type="GO" id="GO:0008967">
    <property type="term" value="F:phosphoglycolate phosphatase activity"/>
    <property type="evidence" value="ECO:0007669"/>
    <property type="project" value="TreeGrafter"/>
</dbReference>
<dbReference type="GO" id="GO:0006281">
    <property type="term" value="P:DNA repair"/>
    <property type="evidence" value="ECO:0007669"/>
    <property type="project" value="TreeGrafter"/>
</dbReference>
<dbReference type="CDD" id="cd02616">
    <property type="entry name" value="HAD_PPase"/>
    <property type="match status" value="1"/>
</dbReference>
<dbReference type="FunFam" id="3.40.50.1000:FF:000022">
    <property type="entry name" value="Phosphoglycolate phosphatase"/>
    <property type="match status" value="1"/>
</dbReference>
<dbReference type="Gene3D" id="3.40.50.1000">
    <property type="entry name" value="HAD superfamily/HAD-like"/>
    <property type="match status" value="1"/>
</dbReference>
<dbReference type="Gene3D" id="1.10.150.240">
    <property type="entry name" value="Putative phosphatase, domain 2"/>
    <property type="match status" value="1"/>
</dbReference>
<dbReference type="HAMAP" id="MF_01250">
    <property type="entry name" value="Pyrophosphat_PpaX"/>
    <property type="match status" value="1"/>
</dbReference>
<dbReference type="InterPro" id="IPR050155">
    <property type="entry name" value="HAD-like_hydrolase_sf"/>
</dbReference>
<dbReference type="InterPro" id="IPR036412">
    <property type="entry name" value="HAD-like_sf"/>
</dbReference>
<dbReference type="InterPro" id="IPR006439">
    <property type="entry name" value="HAD-SF_hydro_IA"/>
</dbReference>
<dbReference type="InterPro" id="IPR041492">
    <property type="entry name" value="HAD_2"/>
</dbReference>
<dbReference type="InterPro" id="IPR023214">
    <property type="entry name" value="HAD_sf"/>
</dbReference>
<dbReference type="InterPro" id="IPR023198">
    <property type="entry name" value="PGP-like_dom2"/>
</dbReference>
<dbReference type="InterPro" id="IPR023733">
    <property type="entry name" value="Pyrophosphatase_Ppax"/>
</dbReference>
<dbReference type="NCBIfam" id="TIGR01549">
    <property type="entry name" value="HAD-SF-IA-v1"/>
    <property type="match status" value="1"/>
</dbReference>
<dbReference type="NCBIfam" id="NF009804">
    <property type="entry name" value="PRK13288.1"/>
    <property type="match status" value="1"/>
</dbReference>
<dbReference type="PANTHER" id="PTHR43434">
    <property type="entry name" value="PHOSPHOGLYCOLATE PHOSPHATASE"/>
    <property type="match status" value="1"/>
</dbReference>
<dbReference type="PANTHER" id="PTHR43434:SF26">
    <property type="entry name" value="PYROPHOSPHATASE PPAX"/>
    <property type="match status" value="1"/>
</dbReference>
<dbReference type="Pfam" id="PF13419">
    <property type="entry name" value="HAD_2"/>
    <property type="match status" value="1"/>
</dbReference>
<dbReference type="PRINTS" id="PR00413">
    <property type="entry name" value="HADHALOGNASE"/>
</dbReference>
<dbReference type="SFLD" id="SFLDG01135">
    <property type="entry name" value="C1.5.6:_HAD__Beta-PGM__Phospha"/>
    <property type="match status" value="1"/>
</dbReference>
<dbReference type="SFLD" id="SFLDG01129">
    <property type="entry name" value="C1.5:_HAD__Beta-PGM__Phosphata"/>
    <property type="match status" value="1"/>
</dbReference>
<dbReference type="SUPFAM" id="SSF56784">
    <property type="entry name" value="HAD-like"/>
    <property type="match status" value="1"/>
</dbReference>
<accession>Q928B2</accession>
<evidence type="ECO:0000255" key="1">
    <source>
        <dbReference type="HAMAP-Rule" id="MF_01250"/>
    </source>
</evidence>
<sequence>MTGKITTLLFDLDGTLINTNELIIKTFQATLQEFLPDRVFTREDILPFIGPSLMETFREINPAHAEEMRVFYREYNLKHHDDLILEYDGVYEAIRALYEEDYKLGIVSTKMYDTIMRGLKVTGLDKFFQVVIGLDQVSNAKPDPEGIEMALSLLNATKEEAIMIGDNYHDIEAGKNAETLTAGVAWAIKGPEHLAQFQPDFMLEKMSDLLAIVRDEE</sequence>
<protein>
    <recommendedName>
        <fullName evidence="1">Pyrophosphatase PpaX</fullName>
        <ecNumber evidence="1">3.6.1.1</ecNumber>
    </recommendedName>
</protein>
<comment type="function">
    <text evidence="1">Hydrolyzes pyrophosphate formed during P-Ser-HPr dephosphorylation by HPrK/P. Might play a role in controlling the intracellular pyrophosphate pool.</text>
</comment>
<comment type="catalytic activity">
    <reaction evidence="1">
        <text>diphosphate + H2O = 2 phosphate + H(+)</text>
        <dbReference type="Rhea" id="RHEA:24576"/>
        <dbReference type="ChEBI" id="CHEBI:15377"/>
        <dbReference type="ChEBI" id="CHEBI:15378"/>
        <dbReference type="ChEBI" id="CHEBI:33019"/>
        <dbReference type="ChEBI" id="CHEBI:43474"/>
        <dbReference type="EC" id="3.6.1.1"/>
    </reaction>
</comment>
<comment type="cofactor">
    <cofactor evidence="1">
        <name>Mg(2+)</name>
        <dbReference type="ChEBI" id="CHEBI:18420"/>
    </cofactor>
</comment>
<comment type="similarity">
    <text evidence="1">Belongs to the HAD-like hydrolase superfamily. PpaX family.</text>
</comment>
<reference key="1">
    <citation type="journal article" date="2001" name="Science">
        <title>Comparative genomics of Listeria species.</title>
        <authorList>
            <person name="Glaser P."/>
            <person name="Frangeul L."/>
            <person name="Buchrieser C."/>
            <person name="Rusniok C."/>
            <person name="Amend A."/>
            <person name="Baquero F."/>
            <person name="Berche P."/>
            <person name="Bloecker H."/>
            <person name="Brandt P."/>
            <person name="Chakraborty T."/>
            <person name="Charbit A."/>
            <person name="Chetouani F."/>
            <person name="Couve E."/>
            <person name="de Daruvar A."/>
            <person name="Dehoux P."/>
            <person name="Domann E."/>
            <person name="Dominguez-Bernal G."/>
            <person name="Duchaud E."/>
            <person name="Durant L."/>
            <person name="Dussurget O."/>
            <person name="Entian K.-D."/>
            <person name="Fsihi H."/>
            <person name="Garcia-del Portillo F."/>
            <person name="Garrido P."/>
            <person name="Gautier L."/>
            <person name="Goebel W."/>
            <person name="Gomez-Lopez N."/>
            <person name="Hain T."/>
            <person name="Hauf J."/>
            <person name="Jackson D."/>
            <person name="Jones L.-M."/>
            <person name="Kaerst U."/>
            <person name="Kreft J."/>
            <person name="Kuhn M."/>
            <person name="Kunst F."/>
            <person name="Kurapkat G."/>
            <person name="Madueno E."/>
            <person name="Maitournam A."/>
            <person name="Mata Vicente J."/>
            <person name="Ng E."/>
            <person name="Nedjari H."/>
            <person name="Nordsiek G."/>
            <person name="Novella S."/>
            <person name="de Pablos B."/>
            <person name="Perez-Diaz J.-C."/>
            <person name="Purcell R."/>
            <person name="Remmel B."/>
            <person name="Rose M."/>
            <person name="Schlueter T."/>
            <person name="Simoes N."/>
            <person name="Tierrez A."/>
            <person name="Vazquez-Boland J.-A."/>
            <person name="Voss H."/>
            <person name="Wehland J."/>
            <person name="Cossart P."/>
        </authorList>
    </citation>
    <scope>NUCLEOTIDE SEQUENCE [LARGE SCALE GENOMIC DNA]</scope>
    <source>
        <strain>ATCC BAA-680 / CLIP 11262</strain>
    </source>
</reference>
<organism>
    <name type="scientific">Listeria innocua serovar 6a (strain ATCC BAA-680 / CLIP 11262)</name>
    <dbReference type="NCBI Taxonomy" id="272626"/>
    <lineage>
        <taxon>Bacteria</taxon>
        <taxon>Bacillati</taxon>
        <taxon>Bacillota</taxon>
        <taxon>Bacilli</taxon>
        <taxon>Bacillales</taxon>
        <taxon>Listeriaceae</taxon>
        <taxon>Listeria</taxon>
    </lineage>
</organism>
<feature type="chain" id="PRO_0000056841" description="Pyrophosphatase PpaX">
    <location>
        <begin position="1"/>
        <end position="217"/>
    </location>
</feature>
<feature type="active site" description="Nucleophile" evidence="1">
    <location>
        <position position="11"/>
    </location>
</feature>
<gene>
    <name evidence="1" type="primary">ppaX</name>
    <name type="ordered locus">lin2624</name>
</gene>